<organism>
    <name type="scientific">Mycobacterium leprae (strain Br4923)</name>
    <dbReference type="NCBI Taxonomy" id="561304"/>
    <lineage>
        <taxon>Bacteria</taxon>
        <taxon>Bacillati</taxon>
        <taxon>Actinomycetota</taxon>
        <taxon>Actinomycetes</taxon>
        <taxon>Mycobacteriales</taxon>
        <taxon>Mycobacteriaceae</taxon>
        <taxon>Mycobacterium</taxon>
    </lineage>
</organism>
<evidence type="ECO:0000255" key="1">
    <source>
        <dbReference type="HAMAP-Rule" id="MF_01631"/>
    </source>
</evidence>
<evidence type="ECO:0000256" key="2">
    <source>
        <dbReference type="SAM" id="MobiDB-lite"/>
    </source>
</evidence>
<name>GLMU_MYCLB</name>
<reference key="1">
    <citation type="journal article" date="2009" name="Nat. Genet.">
        <title>Comparative genomic and phylogeographic analysis of Mycobacterium leprae.</title>
        <authorList>
            <person name="Monot M."/>
            <person name="Honore N."/>
            <person name="Garnier T."/>
            <person name="Zidane N."/>
            <person name="Sherafi D."/>
            <person name="Paniz-Mondolfi A."/>
            <person name="Matsuoka M."/>
            <person name="Taylor G.M."/>
            <person name="Donoghue H.D."/>
            <person name="Bouwman A."/>
            <person name="Mays S."/>
            <person name="Watson C."/>
            <person name="Lockwood D."/>
            <person name="Khamispour A."/>
            <person name="Dowlati Y."/>
            <person name="Jianping S."/>
            <person name="Rea T.H."/>
            <person name="Vera-Cabrera L."/>
            <person name="Stefani M.M."/>
            <person name="Banu S."/>
            <person name="Macdonald M."/>
            <person name="Sapkota B.R."/>
            <person name="Spencer J.S."/>
            <person name="Thomas J."/>
            <person name="Harshman K."/>
            <person name="Singh P."/>
            <person name="Busso P."/>
            <person name="Gattiker A."/>
            <person name="Rougemont J."/>
            <person name="Brennan P.J."/>
            <person name="Cole S.T."/>
        </authorList>
    </citation>
    <scope>NUCLEOTIDE SEQUENCE [LARGE SCALE GENOMIC DNA]</scope>
    <source>
        <strain>Br4923</strain>
    </source>
</reference>
<gene>
    <name evidence="1" type="primary">glmU</name>
    <name type="ordered locus">MLBr00249</name>
</gene>
<protein>
    <recommendedName>
        <fullName evidence="1">Bifunctional protein GlmU</fullName>
    </recommendedName>
    <domain>
        <recommendedName>
            <fullName evidence="1">UDP-N-acetylglucosamine pyrophosphorylase</fullName>
            <ecNumber evidence="1">2.7.7.23</ecNumber>
        </recommendedName>
        <alternativeName>
            <fullName evidence="1">N-acetylglucosamine-1-phosphate uridyltransferase</fullName>
        </alternativeName>
    </domain>
    <domain>
        <recommendedName>
            <fullName evidence="1">Glucosamine-1-phosphate N-acetyltransferase</fullName>
            <ecNumber evidence="1">2.3.1.157</ecNumber>
        </recommendedName>
    </domain>
</protein>
<sequence>MTFRGDTAVLVLAAGPGSRMRSDTPKVLHTIAGRSMLSHSLHAITKLAPQHLVVVLGHEHQRIAPLVAELADTLERTIDVALQDRPRGTGHAVFCGLSALPDDYGGIVVVTSGDTPLLDANTLAELIATHNATSAAVTVLTTTFSDPLGYGRILRTQDNEVMAIIEHADASPSQREIREVNAGVYAFDITALRSALIRLNSNNTQQELYLTDVISILRREGQKVNAQHIDDNALVAGVNNRVQLAELSAELNRRIVATHQVAGVTIIDPATTWIDIDVTIGNDTVIHPGTQLLGRTQIGECCVIGPDTTLTDVLVSQRATVVRTHGTSSTIGAGAMVGPFTYLRPGTVLGTKGKLGAFVETKNSTIGTGAKVPHLTYVGDADIGEHSNIGASSVFVNYDGTAKQRTTIGSHVRTGSDTKFVAPVTVGDGAYTGAGTVVRNDVPPGALAVSVSPQRNIENWVQRKRPGSAAAQAAEKASTRTGKQSQQKSEPD</sequence>
<accession>B8ZU67</accession>
<feature type="chain" id="PRO_1000186467" description="Bifunctional protein GlmU">
    <location>
        <begin position="1"/>
        <end position="492"/>
    </location>
</feature>
<feature type="region of interest" description="Pyrophosphorylase" evidence="1">
    <location>
        <begin position="1"/>
        <end position="241"/>
    </location>
</feature>
<feature type="region of interest" description="Linker" evidence="1">
    <location>
        <begin position="242"/>
        <end position="262"/>
    </location>
</feature>
<feature type="region of interest" description="N-acetyltransferase" evidence="1">
    <location>
        <begin position="263"/>
        <end position="492"/>
    </location>
</feature>
<feature type="region of interest" description="Disordered" evidence="2">
    <location>
        <begin position="461"/>
        <end position="492"/>
    </location>
</feature>
<feature type="compositionally biased region" description="Polar residues" evidence="2">
    <location>
        <begin position="479"/>
        <end position="492"/>
    </location>
</feature>
<feature type="active site" description="Proton acceptor" evidence="1">
    <location>
        <position position="374"/>
    </location>
</feature>
<feature type="binding site" evidence="1">
    <location>
        <begin position="12"/>
        <end position="15"/>
    </location>
    <ligand>
        <name>UDP-N-acetyl-alpha-D-glucosamine</name>
        <dbReference type="ChEBI" id="CHEBI:57705"/>
    </ligand>
</feature>
<feature type="binding site" evidence="1">
    <location>
        <position position="26"/>
    </location>
    <ligand>
        <name>UDP-N-acetyl-alpha-D-glucosamine</name>
        <dbReference type="ChEBI" id="CHEBI:57705"/>
    </ligand>
</feature>
<feature type="binding site" evidence="1">
    <location>
        <position position="83"/>
    </location>
    <ligand>
        <name>UDP-N-acetyl-alpha-D-glucosamine</name>
        <dbReference type="ChEBI" id="CHEBI:57705"/>
    </ligand>
</feature>
<feature type="binding site" evidence="1">
    <location>
        <begin position="88"/>
        <end position="89"/>
    </location>
    <ligand>
        <name>UDP-N-acetyl-alpha-D-glucosamine</name>
        <dbReference type="ChEBI" id="CHEBI:57705"/>
    </ligand>
</feature>
<feature type="binding site" evidence="1">
    <location>
        <begin position="112"/>
        <end position="114"/>
    </location>
    <ligand>
        <name>UDP-N-acetyl-alpha-D-glucosamine</name>
        <dbReference type="ChEBI" id="CHEBI:57705"/>
    </ligand>
</feature>
<feature type="binding site" evidence="1">
    <location>
        <position position="114"/>
    </location>
    <ligand>
        <name>Mg(2+)</name>
        <dbReference type="ChEBI" id="CHEBI:18420"/>
    </ligand>
</feature>
<feature type="binding site" evidence="1">
    <location>
        <position position="151"/>
    </location>
    <ligand>
        <name>UDP-N-acetyl-alpha-D-glucosamine</name>
        <dbReference type="ChEBI" id="CHEBI:57705"/>
    </ligand>
</feature>
<feature type="binding site" evidence="1">
    <location>
        <position position="166"/>
    </location>
    <ligand>
        <name>UDP-N-acetyl-alpha-D-glucosamine</name>
        <dbReference type="ChEBI" id="CHEBI:57705"/>
    </ligand>
</feature>
<feature type="binding site" evidence="1">
    <location>
        <position position="181"/>
    </location>
    <ligand>
        <name>UDP-N-acetyl-alpha-D-glucosamine</name>
        <dbReference type="ChEBI" id="CHEBI:57705"/>
    </ligand>
</feature>
<feature type="binding site" evidence="1">
    <location>
        <position position="239"/>
    </location>
    <ligand>
        <name>Mg(2+)</name>
        <dbReference type="ChEBI" id="CHEBI:18420"/>
    </ligand>
</feature>
<feature type="binding site" evidence="1">
    <location>
        <position position="239"/>
    </location>
    <ligand>
        <name>UDP-N-acetyl-alpha-D-glucosamine</name>
        <dbReference type="ChEBI" id="CHEBI:57705"/>
    </ligand>
</feature>
<feature type="binding site" evidence="1">
    <location>
        <position position="344"/>
    </location>
    <ligand>
        <name>UDP-N-acetyl-alpha-D-glucosamine</name>
        <dbReference type="ChEBI" id="CHEBI:57705"/>
    </ligand>
</feature>
<feature type="binding site" evidence="1">
    <location>
        <position position="362"/>
    </location>
    <ligand>
        <name>UDP-N-acetyl-alpha-D-glucosamine</name>
        <dbReference type="ChEBI" id="CHEBI:57705"/>
    </ligand>
</feature>
<feature type="binding site" evidence="1">
    <location>
        <position position="377"/>
    </location>
    <ligand>
        <name>UDP-N-acetyl-alpha-D-glucosamine</name>
        <dbReference type="ChEBI" id="CHEBI:57705"/>
    </ligand>
</feature>
<feature type="binding site" evidence="1">
    <location>
        <position position="388"/>
    </location>
    <ligand>
        <name>UDP-N-acetyl-alpha-D-glucosamine</name>
        <dbReference type="ChEBI" id="CHEBI:57705"/>
    </ligand>
</feature>
<feature type="binding site" evidence="1">
    <location>
        <position position="391"/>
    </location>
    <ligand>
        <name>acetyl-CoA</name>
        <dbReference type="ChEBI" id="CHEBI:57288"/>
    </ligand>
</feature>
<feature type="binding site" evidence="1">
    <location>
        <begin position="397"/>
        <end position="398"/>
    </location>
    <ligand>
        <name>acetyl-CoA</name>
        <dbReference type="ChEBI" id="CHEBI:57288"/>
    </ligand>
</feature>
<feature type="binding site" evidence="1">
    <location>
        <position position="416"/>
    </location>
    <ligand>
        <name>acetyl-CoA</name>
        <dbReference type="ChEBI" id="CHEBI:57288"/>
    </ligand>
</feature>
<feature type="binding site" evidence="1">
    <location>
        <position position="434"/>
    </location>
    <ligand>
        <name>acetyl-CoA</name>
        <dbReference type="ChEBI" id="CHEBI:57288"/>
    </ligand>
</feature>
<keyword id="KW-0012">Acyltransferase</keyword>
<keyword id="KW-0133">Cell shape</keyword>
<keyword id="KW-0961">Cell wall biogenesis/degradation</keyword>
<keyword id="KW-0963">Cytoplasm</keyword>
<keyword id="KW-0460">Magnesium</keyword>
<keyword id="KW-0479">Metal-binding</keyword>
<keyword id="KW-0511">Multifunctional enzyme</keyword>
<keyword id="KW-0548">Nucleotidyltransferase</keyword>
<keyword id="KW-0573">Peptidoglycan synthesis</keyword>
<keyword id="KW-0677">Repeat</keyword>
<keyword id="KW-0808">Transferase</keyword>
<dbReference type="EC" id="2.7.7.23" evidence="1"/>
<dbReference type="EC" id="2.3.1.157" evidence="1"/>
<dbReference type="EMBL" id="FM211192">
    <property type="protein sequence ID" value="CAR70342.1"/>
    <property type="molecule type" value="Genomic_DNA"/>
</dbReference>
<dbReference type="SMR" id="B8ZU67"/>
<dbReference type="KEGG" id="mlb:MLBr00249"/>
<dbReference type="HOGENOM" id="CLU_029499_15_2_11"/>
<dbReference type="UniPathway" id="UPA00113">
    <property type="reaction ID" value="UER00532"/>
</dbReference>
<dbReference type="UniPathway" id="UPA00113">
    <property type="reaction ID" value="UER00533"/>
</dbReference>
<dbReference type="UniPathway" id="UPA00973"/>
<dbReference type="Proteomes" id="UP000006900">
    <property type="component" value="Chromosome"/>
</dbReference>
<dbReference type="GO" id="GO:0005737">
    <property type="term" value="C:cytoplasm"/>
    <property type="evidence" value="ECO:0007669"/>
    <property type="project" value="UniProtKB-SubCell"/>
</dbReference>
<dbReference type="GO" id="GO:0016020">
    <property type="term" value="C:membrane"/>
    <property type="evidence" value="ECO:0007669"/>
    <property type="project" value="GOC"/>
</dbReference>
<dbReference type="GO" id="GO:0019134">
    <property type="term" value="F:glucosamine-1-phosphate N-acetyltransferase activity"/>
    <property type="evidence" value="ECO:0007669"/>
    <property type="project" value="UniProtKB-UniRule"/>
</dbReference>
<dbReference type="GO" id="GO:0000287">
    <property type="term" value="F:magnesium ion binding"/>
    <property type="evidence" value="ECO:0007669"/>
    <property type="project" value="UniProtKB-UniRule"/>
</dbReference>
<dbReference type="GO" id="GO:0003977">
    <property type="term" value="F:UDP-N-acetylglucosamine diphosphorylase activity"/>
    <property type="evidence" value="ECO:0007669"/>
    <property type="project" value="UniProtKB-UniRule"/>
</dbReference>
<dbReference type="GO" id="GO:0000902">
    <property type="term" value="P:cell morphogenesis"/>
    <property type="evidence" value="ECO:0007669"/>
    <property type="project" value="UniProtKB-UniRule"/>
</dbReference>
<dbReference type="GO" id="GO:0071555">
    <property type="term" value="P:cell wall organization"/>
    <property type="evidence" value="ECO:0007669"/>
    <property type="project" value="UniProtKB-KW"/>
</dbReference>
<dbReference type="GO" id="GO:0009245">
    <property type="term" value="P:lipid A biosynthetic process"/>
    <property type="evidence" value="ECO:0007669"/>
    <property type="project" value="UniProtKB-UniRule"/>
</dbReference>
<dbReference type="GO" id="GO:0009252">
    <property type="term" value="P:peptidoglycan biosynthetic process"/>
    <property type="evidence" value="ECO:0007669"/>
    <property type="project" value="UniProtKB-UniRule"/>
</dbReference>
<dbReference type="GO" id="GO:0008360">
    <property type="term" value="P:regulation of cell shape"/>
    <property type="evidence" value="ECO:0007669"/>
    <property type="project" value="UniProtKB-KW"/>
</dbReference>
<dbReference type="GO" id="GO:0006048">
    <property type="term" value="P:UDP-N-acetylglucosamine biosynthetic process"/>
    <property type="evidence" value="ECO:0007669"/>
    <property type="project" value="UniProtKB-UniPathway"/>
</dbReference>
<dbReference type="CDD" id="cd02540">
    <property type="entry name" value="GT2_GlmU_N_bac"/>
    <property type="match status" value="1"/>
</dbReference>
<dbReference type="CDD" id="cd03353">
    <property type="entry name" value="LbH_GlmU_C"/>
    <property type="match status" value="1"/>
</dbReference>
<dbReference type="Gene3D" id="2.160.10.10">
    <property type="entry name" value="Hexapeptide repeat proteins"/>
    <property type="match status" value="1"/>
</dbReference>
<dbReference type="Gene3D" id="3.90.550.10">
    <property type="entry name" value="Spore Coat Polysaccharide Biosynthesis Protein SpsA, Chain A"/>
    <property type="match status" value="1"/>
</dbReference>
<dbReference type="HAMAP" id="MF_01631">
    <property type="entry name" value="GlmU"/>
    <property type="match status" value="1"/>
</dbReference>
<dbReference type="InterPro" id="IPR005882">
    <property type="entry name" value="Bifunctional_GlmU"/>
</dbReference>
<dbReference type="InterPro" id="IPR050065">
    <property type="entry name" value="GlmU-like"/>
</dbReference>
<dbReference type="InterPro" id="IPR038009">
    <property type="entry name" value="GlmU_C_LbH"/>
</dbReference>
<dbReference type="InterPro" id="IPR001451">
    <property type="entry name" value="Hexapep"/>
</dbReference>
<dbReference type="InterPro" id="IPR025877">
    <property type="entry name" value="MobA-like_NTP_Trfase"/>
</dbReference>
<dbReference type="InterPro" id="IPR029044">
    <property type="entry name" value="Nucleotide-diphossugar_trans"/>
</dbReference>
<dbReference type="InterPro" id="IPR011004">
    <property type="entry name" value="Trimer_LpxA-like_sf"/>
</dbReference>
<dbReference type="NCBIfam" id="TIGR01173">
    <property type="entry name" value="glmU"/>
    <property type="match status" value="1"/>
</dbReference>
<dbReference type="NCBIfam" id="NF010932">
    <property type="entry name" value="PRK14352.1"/>
    <property type="match status" value="1"/>
</dbReference>
<dbReference type="PANTHER" id="PTHR43584:SF3">
    <property type="entry name" value="BIFUNCTIONAL PROTEIN GLMU"/>
    <property type="match status" value="1"/>
</dbReference>
<dbReference type="PANTHER" id="PTHR43584">
    <property type="entry name" value="NUCLEOTIDYL TRANSFERASE"/>
    <property type="match status" value="1"/>
</dbReference>
<dbReference type="Pfam" id="PF00132">
    <property type="entry name" value="Hexapep"/>
    <property type="match status" value="1"/>
</dbReference>
<dbReference type="Pfam" id="PF12804">
    <property type="entry name" value="NTP_transf_3"/>
    <property type="match status" value="1"/>
</dbReference>
<dbReference type="SUPFAM" id="SSF53448">
    <property type="entry name" value="Nucleotide-diphospho-sugar transferases"/>
    <property type="match status" value="1"/>
</dbReference>
<dbReference type="SUPFAM" id="SSF51161">
    <property type="entry name" value="Trimeric LpxA-like enzymes"/>
    <property type="match status" value="1"/>
</dbReference>
<comment type="function">
    <text evidence="1">Catalyzes the last two sequential reactions in the de novo biosynthetic pathway for UDP-N-acetylglucosamine (UDP-GlcNAc). The C-terminal domain catalyzes the transfer of acetyl group from acetyl coenzyme A to glucosamine-1-phosphate (GlcN-1-P) to produce N-acetylglucosamine-1-phosphate (GlcNAc-1-P), which is converted into UDP-GlcNAc by the transfer of uridine 5-monophosphate (from uridine 5-triphosphate), a reaction catalyzed by the N-terminal domain.</text>
</comment>
<comment type="catalytic activity">
    <reaction evidence="1">
        <text>alpha-D-glucosamine 1-phosphate + acetyl-CoA = N-acetyl-alpha-D-glucosamine 1-phosphate + CoA + H(+)</text>
        <dbReference type="Rhea" id="RHEA:13725"/>
        <dbReference type="ChEBI" id="CHEBI:15378"/>
        <dbReference type="ChEBI" id="CHEBI:57287"/>
        <dbReference type="ChEBI" id="CHEBI:57288"/>
        <dbReference type="ChEBI" id="CHEBI:57776"/>
        <dbReference type="ChEBI" id="CHEBI:58516"/>
        <dbReference type="EC" id="2.3.1.157"/>
    </reaction>
</comment>
<comment type="catalytic activity">
    <reaction evidence="1">
        <text>N-acetyl-alpha-D-glucosamine 1-phosphate + UTP + H(+) = UDP-N-acetyl-alpha-D-glucosamine + diphosphate</text>
        <dbReference type="Rhea" id="RHEA:13509"/>
        <dbReference type="ChEBI" id="CHEBI:15378"/>
        <dbReference type="ChEBI" id="CHEBI:33019"/>
        <dbReference type="ChEBI" id="CHEBI:46398"/>
        <dbReference type="ChEBI" id="CHEBI:57705"/>
        <dbReference type="ChEBI" id="CHEBI:57776"/>
        <dbReference type="EC" id="2.7.7.23"/>
    </reaction>
</comment>
<comment type="cofactor">
    <cofactor evidence="1">
        <name>Mg(2+)</name>
        <dbReference type="ChEBI" id="CHEBI:18420"/>
    </cofactor>
    <text evidence="1">Binds 1 Mg(2+) ion per subunit.</text>
</comment>
<comment type="pathway">
    <text evidence="1">Nucleotide-sugar biosynthesis; UDP-N-acetyl-alpha-D-glucosamine biosynthesis; N-acetyl-alpha-D-glucosamine 1-phosphate from alpha-D-glucosamine 6-phosphate (route II): step 2/2.</text>
</comment>
<comment type="pathway">
    <text evidence="1">Nucleotide-sugar biosynthesis; UDP-N-acetyl-alpha-D-glucosamine biosynthesis; UDP-N-acetyl-alpha-D-glucosamine from N-acetyl-alpha-D-glucosamine 1-phosphate: step 1/1.</text>
</comment>
<comment type="pathway">
    <text evidence="1">Bacterial outer membrane biogenesis; LPS lipid A biosynthesis.</text>
</comment>
<comment type="subunit">
    <text evidence="1">Homotrimer.</text>
</comment>
<comment type="subcellular location">
    <subcellularLocation>
        <location evidence="1">Cytoplasm</location>
    </subcellularLocation>
</comment>
<comment type="similarity">
    <text evidence="1">In the N-terminal section; belongs to the N-acetylglucosamine-1-phosphate uridyltransferase family.</text>
</comment>
<comment type="similarity">
    <text evidence="1">In the C-terminal section; belongs to the transferase hexapeptide repeat family.</text>
</comment>
<proteinExistence type="inferred from homology"/>